<feature type="chain" id="PRO_1000186896" description="Formate-dependent phosphoribosylglycinamide formyltransferase">
    <location>
        <begin position="1"/>
        <end position="392"/>
    </location>
</feature>
<feature type="domain" description="ATP-grasp" evidence="1">
    <location>
        <begin position="119"/>
        <end position="308"/>
    </location>
</feature>
<feature type="binding site" evidence="1">
    <location>
        <begin position="22"/>
        <end position="23"/>
    </location>
    <ligand>
        <name>N(1)-(5-phospho-beta-D-ribosyl)glycinamide</name>
        <dbReference type="ChEBI" id="CHEBI:143788"/>
    </ligand>
</feature>
<feature type="binding site" evidence="1">
    <location>
        <position position="82"/>
    </location>
    <ligand>
        <name>N(1)-(5-phospho-beta-D-ribosyl)glycinamide</name>
        <dbReference type="ChEBI" id="CHEBI:143788"/>
    </ligand>
</feature>
<feature type="binding site" evidence="1">
    <location>
        <position position="114"/>
    </location>
    <ligand>
        <name>ATP</name>
        <dbReference type="ChEBI" id="CHEBI:30616"/>
    </ligand>
</feature>
<feature type="binding site" evidence="1">
    <location>
        <position position="155"/>
    </location>
    <ligand>
        <name>ATP</name>
        <dbReference type="ChEBI" id="CHEBI:30616"/>
    </ligand>
</feature>
<feature type="binding site" evidence="1">
    <location>
        <begin position="160"/>
        <end position="165"/>
    </location>
    <ligand>
        <name>ATP</name>
        <dbReference type="ChEBI" id="CHEBI:30616"/>
    </ligand>
</feature>
<feature type="binding site" evidence="1">
    <location>
        <begin position="195"/>
        <end position="198"/>
    </location>
    <ligand>
        <name>ATP</name>
        <dbReference type="ChEBI" id="CHEBI:30616"/>
    </ligand>
</feature>
<feature type="binding site" evidence="1">
    <location>
        <position position="203"/>
    </location>
    <ligand>
        <name>ATP</name>
        <dbReference type="ChEBI" id="CHEBI:30616"/>
    </ligand>
</feature>
<feature type="binding site" evidence="1">
    <location>
        <position position="267"/>
    </location>
    <ligand>
        <name>Mg(2+)</name>
        <dbReference type="ChEBI" id="CHEBI:18420"/>
    </ligand>
</feature>
<feature type="binding site" evidence="1">
    <location>
        <position position="279"/>
    </location>
    <ligand>
        <name>Mg(2+)</name>
        <dbReference type="ChEBI" id="CHEBI:18420"/>
    </ligand>
</feature>
<feature type="binding site" evidence="1">
    <location>
        <position position="286"/>
    </location>
    <ligand>
        <name>N(1)-(5-phospho-beta-D-ribosyl)glycinamide</name>
        <dbReference type="ChEBI" id="CHEBI:143788"/>
    </ligand>
</feature>
<feature type="binding site" evidence="1">
    <location>
        <position position="355"/>
    </location>
    <ligand>
        <name>N(1)-(5-phospho-beta-D-ribosyl)glycinamide</name>
        <dbReference type="ChEBI" id="CHEBI:143788"/>
    </ligand>
</feature>
<feature type="binding site" evidence="1">
    <location>
        <begin position="362"/>
        <end position="363"/>
    </location>
    <ligand>
        <name>N(1)-(5-phospho-beta-D-ribosyl)glycinamide</name>
        <dbReference type="ChEBI" id="CHEBI:143788"/>
    </ligand>
</feature>
<reference key="1">
    <citation type="journal article" date="2011" name="J. Bacteriol.">
        <title>Comparative genomics of 28 Salmonella enterica isolates: evidence for CRISPR-mediated adaptive sublineage evolution.</title>
        <authorList>
            <person name="Fricke W.F."/>
            <person name="Mammel M.K."/>
            <person name="McDermott P.F."/>
            <person name="Tartera C."/>
            <person name="White D.G."/>
            <person name="Leclerc J.E."/>
            <person name="Ravel J."/>
            <person name="Cebula T.A."/>
        </authorList>
    </citation>
    <scope>NUCLEOTIDE SEQUENCE [LARGE SCALE GENOMIC DNA]</scope>
    <source>
        <strain>CVM19633</strain>
    </source>
</reference>
<accession>B4TYQ6</accession>
<organism>
    <name type="scientific">Salmonella schwarzengrund (strain CVM19633)</name>
    <dbReference type="NCBI Taxonomy" id="439843"/>
    <lineage>
        <taxon>Bacteria</taxon>
        <taxon>Pseudomonadati</taxon>
        <taxon>Pseudomonadota</taxon>
        <taxon>Gammaproteobacteria</taxon>
        <taxon>Enterobacterales</taxon>
        <taxon>Enterobacteriaceae</taxon>
        <taxon>Salmonella</taxon>
    </lineage>
</organism>
<protein>
    <recommendedName>
        <fullName evidence="1">Formate-dependent phosphoribosylglycinamide formyltransferase</fullName>
        <ecNumber evidence="1">6.3.1.21</ecNumber>
    </recommendedName>
    <alternativeName>
        <fullName evidence="1">5'-phosphoribosylglycinamide transformylase 2</fullName>
    </alternativeName>
    <alternativeName>
        <fullName evidence="1">Formate-dependent GAR transformylase</fullName>
    </alternativeName>
    <alternativeName>
        <fullName evidence="1">GAR transformylase 2</fullName>
        <shortName evidence="1">GART 2</shortName>
    </alternativeName>
    <alternativeName>
        <fullName evidence="1">Non-folate glycinamide ribonucleotide transformylase</fullName>
    </alternativeName>
    <alternativeName>
        <fullName evidence="1">Phosphoribosylglycinamide formyltransferase 2</fullName>
    </alternativeName>
</protein>
<evidence type="ECO:0000255" key="1">
    <source>
        <dbReference type="HAMAP-Rule" id="MF_01643"/>
    </source>
</evidence>
<dbReference type="EC" id="6.3.1.21" evidence="1"/>
<dbReference type="EMBL" id="CP001127">
    <property type="protein sequence ID" value="ACF91473.1"/>
    <property type="molecule type" value="Genomic_DNA"/>
</dbReference>
<dbReference type="RefSeq" id="WP_000173436.1">
    <property type="nucleotide sequence ID" value="NC_011094.1"/>
</dbReference>
<dbReference type="SMR" id="B4TYQ6"/>
<dbReference type="KEGG" id="sew:SeSA_A2037"/>
<dbReference type="HOGENOM" id="CLU_011534_1_3_6"/>
<dbReference type="UniPathway" id="UPA00074">
    <property type="reaction ID" value="UER00127"/>
</dbReference>
<dbReference type="Proteomes" id="UP000001865">
    <property type="component" value="Chromosome"/>
</dbReference>
<dbReference type="GO" id="GO:0005829">
    <property type="term" value="C:cytosol"/>
    <property type="evidence" value="ECO:0007669"/>
    <property type="project" value="TreeGrafter"/>
</dbReference>
<dbReference type="GO" id="GO:0005524">
    <property type="term" value="F:ATP binding"/>
    <property type="evidence" value="ECO:0007669"/>
    <property type="project" value="UniProtKB-UniRule"/>
</dbReference>
<dbReference type="GO" id="GO:0000287">
    <property type="term" value="F:magnesium ion binding"/>
    <property type="evidence" value="ECO:0007669"/>
    <property type="project" value="InterPro"/>
</dbReference>
<dbReference type="GO" id="GO:0043815">
    <property type="term" value="F:phosphoribosylglycinamide formyltransferase 2 activity"/>
    <property type="evidence" value="ECO:0007669"/>
    <property type="project" value="UniProtKB-UniRule"/>
</dbReference>
<dbReference type="GO" id="GO:0004644">
    <property type="term" value="F:phosphoribosylglycinamide formyltransferase activity"/>
    <property type="evidence" value="ECO:0007669"/>
    <property type="project" value="InterPro"/>
</dbReference>
<dbReference type="GO" id="GO:0006189">
    <property type="term" value="P:'de novo' IMP biosynthetic process"/>
    <property type="evidence" value="ECO:0007669"/>
    <property type="project" value="UniProtKB-UniRule"/>
</dbReference>
<dbReference type="FunFam" id="3.30.1490.20:FF:000013">
    <property type="entry name" value="Formate-dependent phosphoribosylglycinamide formyltransferase"/>
    <property type="match status" value="1"/>
</dbReference>
<dbReference type="FunFam" id="3.30.470.20:FF:000027">
    <property type="entry name" value="Formate-dependent phosphoribosylglycinamide formyltransferase"/>
    <property type="match status" value="1"/>
</dbReference>
<dbReference type="FunFam" id="3.40.50.20:FF:000007">
    <property type="entry name" value="Formate-dependent phosphoribosylglycinamide formyltransferase"/>
    <property type="match status" value="1"/>
</dbReference>
<dbReference type="Gene3D" id="3.40.50.20">
    <property type="match status" value="1"/>
</dbReference>
<dbReference type="Gene3D" id="3.30.1490.20">
    <property type="entry name" value="ATP-grasp fold, A domain"/>
    <property type="match status" value="1"/>
</dbReference>
<dbReference type="Gene3D" id="3.30.470.20">
    <property type="entry name" value="ATP-grasp fold, B domain"/>
    <property type="match status" value="1"/>
</dbReference>
<dbReference type="HAMAP" id="MF_01643">
    <property type="entry name" value="PurT"/>
    <property type="match status" value="1"/>
</dbReference>
<dbReference type="InterPro" id="IPR011761">
    <property type="entry name" value="ATP-grasp"/>
</dbReference>
<dbReference type="InterPro" id="IPR003135">
    <property type="entry name" value="ATP-grasp_carboxylate-amine"/>
</dbReference>
<dbReference type="InterPro" id="IPR013815">
    <property type="entry name" value="ATP_grasp_subdomain_1"/>
</dbReference>
<dbReference type="InterPro" id="IPR016185">
    <property type="entry name" value="PreATP-grasp_dom_sf"/>
</dbReference>
<dbReference type="InterPro" id="IPR005862">
    <property type="entry name" value="PurT"/>
</dbReference>
<dbReference type="InterPro" id="IPR054350">
    <property type="entry name" value="PurT/PurK_preATP-grasp"/>
</dbReference>
<dbReference type="InterPro" id="IPR048740">
    <property type="entry name" value="PurT_C"/>
</dbReference>
<dbReference type="InterPro" id="IPR011054">
    <property type="entry name" value="Rudment_hybrid_motif"/>
</dbReference>
<dbReference type="NCBIfam" id="NF006766">
    <property type="entry name" value="PRK09288.1"/>
    <property type="match status" value="1"/>
</dbReference>
<dbReference type="NCBIfam" id="TIGR01142">
    <property type="entry name" value="purT"/>
    <property type="match status" value="1"/>
</dbReference>
<dbReference type="PANTHER" id="PTHR43055">
    <property type="entry name" value="FORMATE-DEPENDENT PHOSPHORIBOSYLGLYCINAMIDE FORMYLTRANSFERASE"/>
    <property type="match status" value="1"/>
</dbReference>
<dbReference type="PANTHER" id="PTHR43055:SF1">
    <property type="entry name" value="FORMATE-DEPENDENT PHOSPHORIBOSYLGLYCINAMIDE FORMYLTRANSFERASE"/>
    <property type="match status" value="1"/>
</dbReference>
<dbReference type="Pfam" id="PF02222">
    <property type="entry name" value="ATP-grasp"/>
    <property type="match status" value="1"/>
</dbReference>
<dbReference type="Pfam" id="PF21244">
    <property type="entry name" value="PurT_C"/>
    <property type="match status" value="1"/>
</dbReference>
<dbReference type="Pfam" id="PF22660">
    <property type="entry name" value="RS_preATP-grasp-like"/>
    <property type="match status" value="1"/>
</dbReference>
<dbReference type="SUPFAM" id="SSF56059">
    <property type="entry name" value="Glutathione synthetase ATP-binding domain-like"/>
    <property type="match status" value="1"/>
</dbReference>
<dbReference type="SUPFAM" id="SSF52440">
    <property type="entry name" value="PreATP-grasp domain"/>
    <property type="match status" value="1"/>
</dbReference>
<dbReference type="SUPFAM" id="SSF51246">
    <property type="entry name" value="Rudiment single hybrid motif"/>
    <property type="match status" value="1"/>
</dbReference>
<dbReference type="PROSITE" id="PS50975">
    <property type="entry name" value="ATP_GRASP"/>
    <property type="match status" value="1"/>
</dbReference>
<sequence>MTLLGTALRPAATRVMLLGAGELGKEVAIECQRLGIEVIAVDRYPDAPAMHVAHRSHVINMLDSEALRHVITEEKPHYIVPEIEAIATDTLRELEGEGLNVVPCARATQLTMNREGIRRLAAEELGLPTSTYRFADSEASFHDAVAAVGFPCIVKPVMSSSGKGQSFIRSAEQLAQAWEYAQQGGRAGAGRVIVEGVVKFDFEITLLTVSAVDGVHFCAPVGHRQQDGDYRESWQPQQMSELALKRAQEIARHVVLALGGHGLFGVELFVCGDEVIFSEVSPRPHDTGMVTLISQDLSEFALHVRAFLGMPVGAIRQYGPAASAVILPQLTSQNVTFDNVHAAVGAGVQVRLFGKPEIDGTRRLGVALATGENVEEAVIRAKKAASRVTVKG</sequence>
<comment type="function">
    <text evidence="1">Involved in the de novo purine biosynthesis. Catalyzes the transfer of formate to 5-phospho-ribosyl-glycinamide (GAR), producing 5-phospho-ribosyl-N-formylglycinamide (FGAR). Formate is provided by PurU via hydrolysis of 10-formyl-tetrahydrofolate.</text>
</comment>
<comment type="catalytic activity">
    <reaction evidence="1">
        <text>N(1)-(5-phospho-beta-D-ribosyl)glycinamide + formate + ATP = N(2)-formyl-N(1)-(5-phospho-beta-D-ribosyl)glycinamide + ADP + phosphate + H(+)</text>
        <dbReference type="Rhea" id="RHEA:24829"/>
        <dbReference type="ChEBI" id="CHEBI:15378"/>
        <dbReference type="ChEBI" id="CHEBI:15740"/>
        <dbReference type="ChEBI" id="CHEBI:30616"/>
        <dbReference type="ChEBI" id="CHEBI:43474"/>
        <dbReference type="ChEBI" id="CHEBI:143788"/>
        <dbReference type="ChEBI" id="CHEBI:147286"/>
        <dbReference type="ChEBI" id="CHEBI:456216"/>
        <dbReference type="EC" id="6.3.1.21"/>
    </reaction>
    <physiologicalReaction direction="left-to-right" evidence="1">
        <dbReference type="Rhea" id="RHEA:24830"/>
    </physiologicalReaction>
</comment>
<comment type="pathway">
    <text evidence="1">Purine metabolism; IMP biosynthesis via de novo pathway; N(2)-formyl-N(1)-(5-phospho-D-ribosyl)glycinamide from N(1)-(5-phospho-D-ribosyl)glycinamide (formate route): step 1/1.</text>
</comment>
<comment type="subunit">
    <text evidence="1">Homodimer.</text>
</comment>
<comment type="similarity">
    <text evidence="1">Belongs to the PurK/PurT family.</text>
</comment>
<gene>
    <name evidence="1" type="primary">purT</name>
    <name type="ordered locus">SeSA_A2037</name>
</gene>
<proteinExistence type="inferred from homology"/>
<name>PURT_SALSV</name>
<keyword id="KW-0067">ATP-binding</keyword>
<keyword id="KW-0436">Ligase</keyword>
<keyword id="KW-0460">Magnesium</keyword>
<keyword id="KW-0479">Metal-binding</keyword>
<keyword id="KW-0547">Nucleotide-binding</keyword>
<keyword id="KW-0658">Purine biosynthesis</keyword>